<sequence>MRNTSKELQGATHRYAPCDWYYHVPVKRSEKAVDAPPASQIPGLSNLGDSHSENLPGTRRYWIKETDSEYVKLAKQGGRPDLLKHFAPGTRKGSPVAYSLPDWYIHHSKPPTASQQEVRAVSMPDYMVHEEFNPDQANGSYASRRGPFDFDMKTVWQREAEELEKEKKKLRLPAIDSKYLSKAGTPLGPKNPAGSRLSFPPVPGQKNSSPTNFSKLISNGYKDEWLQQQQRADSDKRTPKTSRASVLSQSPRDLEGPQDAARLQDAEASEGPEDTPESSQSPEESVSASTPAELK</sequence>
<keyword id="KW-0025">Alternative splicing</keyword>
<keyword id="KW-0597">Phosphoprotein</keyword>
<keyword id="KW-1267">Proteomics identification</keyword>
<keyword id="KW-1185">Reference proteome</keyword>
<protein>
    <recommendedName>
        <fullName>Uncharacterized protein C7orf57</fullName>
    </recommendedName>
</protein>
<accession>Q8NEG2</accession>
<accession>C9JBJ8</accession>
<dbReference type="EMBL" id="AC069279">
    <property type="status" value="NOT_ANNOTATED_CDS"/>
    <property type="molecule type" value="Genomic_DNA"/>
</dbReference>
<dbReference type="EMBL" id="BC031107">
    <property type="protein sequence ID" value="AAH31107.1"/>
    <property type="molecule type" value="mRNA"/>
</dbReference>
<dbReference type="CCDS" id="CCDS47583.1">
    <molecule id="Q8NEG2-1"/>
</dbReference>
<dbReference type="CCDS" id="CCDS59054.1">
    <molecule id="Q8NEG2-2"/>
</dbReference>
<dbReference type="RefSeq" id="NP_001093629.1">
    <molecule id="Q8NEG2-1"/>
    <property type="nucleotide sequence ID" value="NM_001100159.3"/>
</dbReference>
<dbReference type="RefSeq" id="NP_001254795.1">
    <molecule id="Q8NEG2-2"/>
    <property type="nucleotide sequence ID" value="NM_001267866.2"/>
</dbReference>
<dbReference type="RefSeq" id="XP_011513423.1">
    <molecule id="Q8NEG2-1"/>
    <property type="nucleotide sequence ID" value="XM_011515121.3"/>
</dbReference>
<dbReference type="BioGRID" id="126452">
    <property type="interactions" value="9"/>
</dbReference>
<dbReference type="FunCoup" id="Q8NEG2">
    <property type="interactions" value="75"/>
</dbReference>
<dbReference type="STRING" id="9606.ENSP00000335500"/>
<dbReference type="GlyGen" id="Q8NEG2">
    <property type="glycosylation" value="1 site"/>
</dbReference>
<dbReference type="iPTMnet" id="Q8NEG2"/>
<dbReference type="PhosphoSitePlus" id="Q8NEG2"/>
<dbReference type="BioMuta" id="C7orf57"/>
<dbReference type="DMDM" id="296439408"/>
<dbReference type="jPOST" id="Q8NEG2"/>
<dbReference type="MassIVE" id="Q8NEG2"/>
<dbReference type="PaxDb" id="9606-ENSP00000335500"/>
<dbReference type="PeptideAtlas" id="Q8NEG2"/>
<dbReference type="ProteomicsDB" id="73161">
    <molecule id="Q8NEG2-1"/>
</dbReference>
<dbReference type="ProteomicsDB" id="9475"/>
<dbReference type="Antibodypedia" id="7300">
    <property type="antibodies" value="59 antibodies from 13 providers"/>
</dbReference>
<dbReference type="DNASU" id="136288"/>
<dbReference type="Ensembl" id="ENST00000348904.4">
    <molecule id="Q8NEG2-1"/>
    <property type="protein sequence ID" value="ENSP00000335500.3"/>
    <property type="gene ID" value="ENSG00000164746.14"/>
</dbReference>
<dbReference type="Ensembl" id="ENST00000435376.5">
    <molecule id="Q8NEG2-2"/>
    <property type="protein sequence ID" value="ENSP00000391652.1"/>
    <property type="gene ID" value="ENSG00000164746.14"/>
</dbReference>
<dbReference type="GeneID" id="136288"/>
<dbReference type="KEGG" id="hsa:136288"/>
<dbReference type="MANE-Select" id="ENST00000348904.4">
    <property type="protein sequence ID" value="ENSP00000335500.3"/>
    <property type="RefSeq nucleotide sequence ID" value="NM_001100159.3"/>
    <property type="RefSeq protein sequence ID" value="NP_001093629.1"/>
</dbReference>
<dbReference type="UCSC" id="uc003toh.6">
    <molecule id="Q8NEG2-1"/>
    <property type="organism name" value="human"/>
</dbReference>
<dbReference type="AGR" id="HGNC:22247"/>
<dbReference type="CTD" id="136288"/>
<dbReference type="GeneCards" id="C7orf57"/>
<dbReference type="HGNC" id="HGNC:22247">
    <property type="gene designation" value="C7orf57"/>
</dbReference>
<dbReference type="HPA" id="ENSG00000164746">
    <property type="expression patterns" value="Tissue enhanced (choroid plexus, fallopian tube)"/>
</dbReference>
<dbReference type="neXtProt" id="NX_Q8NEG2"/>
<dbReference type="OpenTargets" id="ENSG00000164746"/>
<dbReference type="PharmGKB" id="PA162380613"/>
<dbReference type="VEuPathDB" id="HostDB:ENSG00000164746"/>
<dbReference type="eggNOG" id="ENOG502S6DP">
    <property type="taxonomic scope" value="Eukaryota"/>
</dbReference>
<dbReference type="GeneTree" id="ENSGT00390000014376"/>
<dbReference type="HOGENOM" id="CLU_123119_0_0_1"/>
<dbReference type="InParanoid" id="Q8NEG2"/>
<dbReference type="OMA" id="MVYEEFH"/>
<dbReference type="OrthoDB" id="10012494at2759"/>
<dbReference type="PAN-GO" id="Q8NEG2">
    <property type="GO annotations" value="0 GO annotations based on evolutionary models"/>
</dbReference>
<dbReference type="PhylomeDB" id="Q8NEG2"/>
<dbReference type="TreeFam" id="TF330795"/>
<dbReference type="PathwayCommons" id="Q8NEG2"/>
<dbReference type="BioGRID-ORCS" id="136288">
    <property type="hits" value="7 hits in 1132 CRISPR screens"/>
</dbReference>
<dbReference type="ChiTaRS" id="C7orf57">
    <property type="organism name" value="human"/>
</dbReference>
<dbReference type="GenomeRNAi" id="136288"/>
<dbReference type="Pharos" id="Q8NEG2">
    <property type="development level" value="Tdark"/>
</dbReference>
<dbReference type="PRO" id="PR:Q8NEG2"/>
<dbReference type="Proteomes" id="UP000005640">
    <property type="component" value="Chromosome 7"/>
</dbReference>
<dbReference type="RNAct" id="Q8NEG2">
    <property type="molecule type" value="protein"/>
</dbReference>
<dbReference type="Bgee" id="ENSG00000164746">
    <property type="expression patterns" value="Expressed in bronchial epithelial cell and 81 other cell types or tissues"/>
</dbReference>
<dbReference type="ExpressionAtlas" id="Q8NEG2">
    <property type="expression patterns" value="baseline and differential"/>
</dbReference>
<dbReference type="InterPro" id="IPR040247">
    <property type="entry name" value="DUF5524"/>
</dbReference>
<dbReference type="PANTHER" id="PTHR31097:SF2">
    <property type="entry name" value="CHROMOSOME 7 OPEN READING FRAME 57"/>
    <property type="match status" value="1"/>
</dbReference>
<dbReference type="PANTHER" id="PTHR31097">
    <property type="entry name" value="SI:DKEY-276J7.1"/>
    <property type="match status" value="1"/>
</dbReference>
<dbReference type="Pfam" id="PF17662">
    <property type="entry name" value="DUF5524"/>
    <property type="match status" value="1"/>
</dbReference>
<proteinExistence type="evidence at protein level"/>
<reference key="1">
    <citation type="journal article" date="2003" name="Nature">
        <title>The DNA sequence of human chromosome 7.</title>
        <authorList>
            <person name="Hillier L.W."/>
            <person name="Fulton R.S."/>
            <person name="Fulton L.A."/>
            <person name="Graves T.A."/>
            <person name="Pepin K.H."/>
            <person name="Wagner-McPherson C."/>
            <person name="Layman D."/>
            <person name="Maas J."/>
            <person name="Jaeger S."/>
            <person name="Walker R."/>
            <person name="Wylie K."/>
            <person name="Sekhon M."/>
            <person name="Becker M.C."/>
            <person name="O'Laughlin M.D."/>
            <person name="Schaller M.E."/>
            <person name="Fewell G.A."/>
            <person name="Delehaunty K.D."/>
            <person name="Miner T.L."/>
            <person name="Nash W.E."/>
            <person name="Cordes M."/>
            <person name="Du H."/>
            <person name="Sun H."/>
            <person name="Edwards J."/>
            <person name="Bradshaw-Cordum H."/>
            <person name="Ali J."/>
            <person name="Andrews S."/>
            <person name="Isak A."/>
            <person name="Vanbrunt A."/>
            <person name="Nguyen C."/>
            <person name="Du F."/>
            <person name="Lamar B."/>
            <person name="Courtney L."/>
            <person name="Kalicki J."/>
            <person name="Ozersky P."/>
            <person name="Bielicki L."/>
            <person name="Scott K."/>
            <person name="Holmes A."/>
            <person name="Harkins R."/>
            <person name="Harris A."/>
            <person name="Strong C.M."/>
            <person name="Hou S."/>
            <person name="Tomlinson C."/>
            <person name="Dauphin-Kohlberg S."/>
            <person name="Kozlowicz-Reilly A."/>
            <person name="Leonard S."/>
            <person name="Rohlfing T."/>
            <person name="Rock S.M."/>
            <person name="Tin-Wollam A.-M."/>
            <person name="Abbott A."/>
            <person name="Minx P."/>
            <person name="Maupin R."/>
            <person name="Strowmatt C."/>
            <person name="Latreille P."/>
            <person name="Miller N."/>
            <person name="Johnson D."/>
            <person name="Murray J."/>
            <person name="Woessner J.P."/>
            <person name="Wendl M.C."/>
            <person name="Yang S.-P."/>
            <person name="Schultz B.R."/>
            <person name="Wallis J.W."/>
            <person name="Spieth J."/>
            <person name="Bieri T.A."/>
            <person name="Nelson J.O."/>
            <person name="Berkowicz N."/>
            <person name="Wohldmann P.E."/>
            <person name="Cook L.L."/>
            <person name="Hickenbotham M.T."/>
            <person name="Eldred J."/>
            <person name="Williams D."/>
            <person name="Bedell J.A."/>
            <person name="Mardis E.R."/>
            <person name="Clifton S.W."/>
            <person name="Chissoe S.L."/>
            <person name="Marra M.A."/>
            <person name="Raymond C."/>
            <person name="Haugen E."/>
            <person name="Gillett W."/>
            <person name="Zhou Y."/>
            <person name="James R."/>
            <person name="Phelps K."/>
            <person name="Iadanoto S."/>
            <person name="Bubb K."/>
            <person name="Simms E."/>
            <person name="Levy R."/>
            <person name="Clendenning J."/>
            <person name="Kaul R."/>
            <person name="Kent W.J."/>
            <person name="Furey T.S."/>
            <person name="Baertsch R.A."/>
            <person name="Brent M.R."/>
            <person name="Keibler E."/>
            <person name="Flicek P."/>
            <person name="Bork P."/>
            <person name="Suyama M."/>
            <person name="Bailey J.A."/>
            <person name="Portnoy M.E."/>
            <person name="Torrents D."/>
            <person name="Chinwalla A.T."/>
            <person name="Gish W.R."/>
            <person name="Eddy S.R."/>
            <person name="McPherson J.D."/>
            <person name="Olson M.V."/>
            <person name="Eichler E.E."/>
            <person name="Green E.D."/>
            <person name="Waterston R.H."/>
            <person name="Wilson R.K."/>
        </authorList>
    </citation>
    <scope>NUCLEOTIDE SEQUENCE [LARGE SCALE GENOMIC DNA]</scope>
</reference>
<reference key="2">
    <citation type="journal article" date="2004" name="Genome Res.">
        <title>The status, quality, and expansion of the NIH full-length cDNA project: the Mammalian Gene Collection (MGC).</title>
        <authorList>
            <consortium name="The MGC Project Team"/>
        </authorList>
    </citation>
    <scope>NUCLEOTIDE SEQUENCE [LARGE SCALE MRNA]</scope>
    <source>
        <tissue>Testis</tissue>
    </source>
</reference>
<organism>
    <name type="scientific">Homo sapiens</name>
    <name type="common">Human</name>
    <dbReference type="NCBI Taxonomy" id="9606"/>
    <lineage>
        <taxon>Eukaryota</taxon>
        <taxon>Metazoa</taxon>
        <taxon>Chordata</taxon>
        <taxon>Craniata</taxon>
        <taxon>Vertebrata</taxon>
        <taxon>Euteleostomi</taxon>
        <taxon>Mammalia</taxon>
        <taxon>Eutheria</taxon>
        <taxon>Euarchontoglires</taxon>
        <taxon>Primates</taxon>
        <taxon>Haplorrhini</taxon>
        <taxon>Catarrhini</taxon>
        <taxon>Hominidae</taxon>
        <taxon>Homo</taxon>
    </lineage>
</organism>
<gene>
    <name type="primary">C7orf57</name>
</gene>
<feature type="chain" id="PRO_0000310991" description="Uncharacterized protein C7orf57">
    <location>
        <begin position="1"/>
        <end position="295"/>
    </location>
</feature>
<feature type="region of interest" description="Disordered" evidence="2">
    <location>
        <begin position="33"/>
        <end position="52"/>
    </location>
</feature>
<feature type="region of interest" description="Disordered" evidence="2">
    <location>
        <begin position="180"/>
        <end position="295"/>
    </location>
</feature>
<feature type="compositionally biased region" description="Polar residues" evidence="2">
    <location>
        <begin position="205"/>
        <end position="217"/>
    </location>
</feature>
<feature type="compositionally biased region" description="Polar residues" evidence="2">
    <location>
        <begin position="241"/>
        <end position="251"/>
    </location>
</feature>
<feature type="compositionally biased region" description="Acidic residues" evidence="2">
    <location>
        <begin position="267"/>
        <end position="276"/>
    </location>
</feature>
<feature type="compositionally biased region" description="Low complexity" evidence="2">
    <location>
        <begin position="277"/>
        <end position="289"/>
    </location>
</feature>
<feature type="modified residue" description="Phosphoserine" evidence="1">
    <location>
        <position position="50"/>
    </location>
</feature>
<feature type="splice variant" id="VSP_046991" description="In isoform 2." evidence="3">
    <location>
        <begin position="1"/>
        <end position="122"/>
    </location>
</feature>
<feature type="splice variant" id="VSP_046992" description="In isoform 2." evidence="3">
    <location>
        <begin position="203"/>
        <end position="218"/>
    </location>
</feature>
<feature type="splice variant" id="VSP_046993" description="In isoform 2." evidence="3">
    <original>ESSQS</original>
    <variation>G</variation>
    <location>
        <begin position="277"/>
        <end position="281"/>
    </location>
</feature>
<feature type="sequence variant" id="VAR_056813" description="In dbSNP:rs10951942.">
    <original>A</original>
    <variation>S</variation>
    <location>
        <position position="74"/>
    </location>
</feature>
<feature type="sequence conflict" description="In Ref. 2; AAH31107." evidence="3" ref="2">
    <original>P</original>
    <variation>L</variation>
    <location>
        <position position="124"/>
    </location>
</feature>
<feature type="sequence conflict" description="In Ref. 2; AAH31107." evidence="3" ref="2">
    <original>M</original>
    <variation>T</variation>
    <location>
        <position position="152"/>
    </location>
</feature>
<feature type="sequence conflict" description="In Ref. 2; AAH31107." evidence="3" ref="2">
    <original>P</original>
    <variation>H</variation>
    <location>
        <position position="201"/>
    </location>
</feature>
<name>CG057_HUMAN</name>
<comment type="alternative products">
    <event type="alternative splicing"/>
    <isoform>
        <id>Q8NEG2-1</id>
        <name>1</name>
        <sequence type="displayed"/>
    </isoform>
    <isoform>
        <id>Q8NEG2-2</id>
        <name>2</name>
        <sequence type="described" ref="VSP_046991 VSP_046992 VSP_046993"/>
    </isoform>
</comment>
<evidence type="ECO:0000250" key="1">
    <source>
        <dbReference type="UniProtKB" id="Q5SS90"/>
    </source>
</evidence>
<evidence type="ECO:0000256" key="2">
    <source>
        <dbReference type="SAM" id="MobiDB-lite"/>
    </source>
</evidence>
<evidence type="ECO:0000305" key="3"/>